<feature type="chain" id="PRO_1000056279" description="Ubiquinone/menaquinone biosynthesis C-methyltransferase UbiE">
    <location>
        <begin position="1"/>
        <end position="256"/>
    </location>
</feature>
<feature type="binding site" evidence="1">
    <location>
        <position position="79"/>
    </location>
    <ligand>
        <name>S-adenosyl-L-methionine</name>
        <dbReference type="ChEBI" id="CHEBI:59789"/>
    </ligand>
</feature>
<feature type="binding site" evidence="1">
    <location>
        <position position="100"/>
    </location>
    <ligand>
        <name>S-adenosyl-L-methionine</name>
        <dbReference type="ChEBI" id="CHEBI:59789"/>
    </ligand>
</feature>
<feature type="binding site" evidence="1">
    <location>
        <begin position="128"/>
        <end position="129"/>
    </location>
    <ligand>
        <name>S-adenosyl-L-methionine</name>
        <dbReference type="ChEBI" id="CHEBI:59789"/>
    </ligand>
</feature>
<organism>
    <name type="scientific">Stutzerimonas stutzeri (strain A1501)</name>
    <name type="common">Pseudomonas stutzeri</name>
    <dbReference type="NCBI Taxonomy" id="379731"/>
    <lineage>
        <taxon>Bacteria</taxon>
        <taxon>Pseudomonadati</taxon>
        <taxon>Pseudomonadota</taxon>
        <taxon>Gammaproteobacteria</taxon>
        <taxon>Pseudomonadales</taxon>
        <taxon>Pseudomonadaceae</taxon>
        <taxon>Stutzerimonas</taxon>
    </lineage>
</organism>
<gene>
    <name evidence="1" type="primary">ubiE</name>
    <name type="ordered locus">PST_0340</name>
</gene>
<proteinExistence type="inferred from homology"/>
<name>UBIE_STUS1</name>
<reference key="1">
    <citation type="journal article" date="2008" name="Proc. Natl. Acad. Sci. U.S.A.">
        <title>Nitrogen fixation island and rhizosphere competence traits in the genome of root-associated Pseudomonas stutzeri A1501.</title>
        <authorList>
            <person name="Yan Y."/>
            <person name="Yang J."/>
            <person name="Dou Y."/>
            <person name="Chen M."/>
            <person name="Ping S."/>
            <person name="Peng J."/>
            <person name="Lu W."/>
            <person name="Zhang W."/>
            <person name="Yao Z."/>
            <person name="Li H."/>
            <person name="Liu W."/>
            <person name="He S."/>
            <person name="Geng L."/>
            <person name="Zhang X."/>
            <person name="Yang F."/>
            <person name="Yu H."/>
            <person name="Zhan Y."/>
            <person name="Li D."/>
            <person name="Lin Z."/>
            <person name="Wang Y."/>
            <person name="Elmerich C."/>
            <person name="Lin M."/>
            <person name="Jin Q."/>
        </authorList>
    </citation>
    <scope>NUCLEOTIDE SEQUENCE [LARGE SCALE GENOMIC DNA]</scope>
    <source>
        <strain>A1501</strain>
    </source>
</reference>
<dbReference type="EC" id="2.1.1.163" evidence="1"/>
<dbReference type="EC" id="2.1.1.201" evidence="1"/>
<dbReference type="EMBL" id="CP000304">
    <property type="protein sequence ID" value="ABP78046.1"/>
    <property type="molecule type" value="Genomic_DNA"/>
</dbReference>
<dbReference type="RefSeq" id="WP_011911578.1">
    <property type="nucleotide sequence ID" value="NC_009434.1"/>
</dbReference>
<dbReference type="SMR" id="A4VGE5"/>
<dbReference type="KEGG" id="psa:PST_0340"/>
<dbReference type="eggNOG" id="COG2226">
    <property type="taxonomic scope" value="Bacteria"/>
</dbReference>
<dbReference type="HOGENOM" id="CLU_037990_0_0_6"/>
<dbReference type="UniPathway" id="UPA00079">
    <property type="reaction ID" value="UER00169"/>
</dbReference>
<dbReference type="UniPathway" id="UPA00232"/>
<dbReference type="Proteomes" id="UP000000233">
    <property type="component" value="Chromosome"/>
</dbReference>
<dbReference type="GO" id="GO:0008425">
    <property type="term" value="F:2-methoxy-6-polyprenyl-1,4-benzoquinol methyltransferase activity"/>
    <property type="evidence" value="ECO:0007669"/>
    <property type="project" value="UniProtKB-UniRule"/>
</dbReference>
<dbReference type="GO" id="GO:0043770">
    <property type="term" value="F:demethylmenaquinone methyltransferase activity"/>
    <property type="evidence" value="ECO:0007669"/>
    <property type="project" value="UniProtKB-UniRule"/>
</dbReference>
<dbReference type="GO" id="GO:0009060">
    <property type="term" value="P:aerobic respiration"/>
    <property type="evidence" value="ECO:0007669"/>
    <property type="project" value="UniProtKB-UniRule"/>
</dbReference>
<dbReference type="GO" id="GO:0009234">
    <property type="term" value="P:menaquinone biosynthetic process"/>
    <property type="evidence" value="ECO:0007669"/>
    <property type="project" value="UniProtKB-UniRule"/>
</dbReference>
<dbReference type="GO" id="GO:0032259">
    <property type="term" value="P:methylation"/>
    <property type="evidence" value="ECO:0007669"/>
    <property type="project" value="UniProtKB-KW"/>
</dbReference>
<dbReference type="CDD" id="cd02440">
    <property type="entry name" value="AdoMet_MTases"/>
    <property type="match status" value="1"/>
</dbReference>
<dbReference type="FunFam" id="3.40.50.150:FF:000014">
    <property type="entry name" value="Ubiquinone/menaquinone biosynthesis C-methyltransferase UbiE"/>
    <property type="match status" value="1"/>
</dbReference>
<dbReference type="Gene3D" id="3.40.50.150">
    <property type="entry name" value="Vaccinia Virus protein VP39"/>
    <property type="match status" value="1"/>
</dbReference>
<dbReference type="HAMAP" id="MF_01813">
    <property type="entry name" value="MenG_UbiE_methyltr"/>
    <property type="match status" value="1"/>
</dbReference>
<dbReference type="InterPro" id="IPR029063">
    <property type="entry name" value="SAM-dependent_MTases_sf"/>
</dbReference>
<dbReference type="InterPro" id="IPR004033">
    <property type="entry name" value="UbiE/COQ5_MeTrFase"/>
</dbReference>
<dbReference type="InterPro" id="IPR023576">
    <property type="entry name" value="UbiE/COQ5_MeTrFase_CS"/>
</dbReference>
<dbReference type="NCBIfam" id="TIGR01934">
    <property type="entry name" value="MenG_MenH_UbiE"/>
    <property type="match status" value="1"/>
</dbReference>
<dbReference type="NCBIfam" id="NF001240">
    <property type="entry name" value="PRK00216.1-1"/>
    <property type="match status" value="1"/>
</dbReference>
<dbReference type="NCBIfam" id="NF001244">
    <property type="entry name" value="PRK00216.1-5"/>
    <property type="match status" value="1"/>
</dbReference>
<dbReference type="PANTHER" id="PTHR43591:SF24">
    <property type="entry name" value="2-METHOXY-6-POLYPRENYL-1,4-BENZOQUINOL METHYLASE, MITOCHONDRIAL"/>
    <property type="match status" value="1"/>
</dbReference>
<dbReference type="PANTHER" id="PTHR43591">
    <property type="entry name" value="METHYLTRANSFERASE"/>
    <property type="match status" value="1"/>
</dbReference>
<dbReference type="Pfam" id="PF01209">
    <property type="entry name" value="Ubie_methyltran"/>
    <property type="match status" value="1"/>
</dbReference>
<dbReference type="SUPFAM" id="SSF53335">
    <property type="entry name" value="S-adenosyl-L-methionine-dependent methyltransferases"/>
    <property type="match status" value="1"/>
</dbReference>
<dbReference type="PROSITE" id="PS51608">
    <property type="entry name" value="SAM_MT_UBIE"/>
    <property type="match status" value="1"/>
</dbReference>
<dbReference type="PROSITE" id="PS01183">
    <property type="entry name" value="UBIE_1"/>
    <property type="match status" value="1"/>
</dbReference>
<dbReference type="PROSITE" id="PS01184">
    <property type="entry name" value="UBIE_2"/>
    <property type="match status" value="1"/>
</dbReference>
<evidence type="ECO:0000255" key="1">
    <source>
        <dbReference type="HAMAP-Rule" id="MF_01813"/>
    </source>
</evidence>
<protein>
    <recommendedName>
        <fullName evidence="1">Ubiquinone/menaquinone biosynthesis C-methyltransferase UbiE</fullName>
        <ecNumber evidence="1">2.1.1.163</ecNumber>
        <ecNumber evidence="1">2.1.1.201</ecNumber>
    </recommendedName>
    <alternativeName>
        <fullName evidence="1">2-methoxy-6-polyprenyl-1,4-benzoquinol methylase</fullName>
    </alternativeName>
    <alternativeName>
        <fullName evidence="1">Demethylmenaquinone methyltransferase</fullName>
    </alternativeName>
</protein>
<keyword id="KW-0474">Menaquinone biosynthesis</keyword>
<keyword id="KW-0489">Methyltransferase</keyword>
<keyword id="KW-1185">Reference proteome</keyword>
<keyword id="KW-0949">S-adenosyl-L-methionine</keyword>
<keyword id="KW-0808">Transferase</keyword>
<keyword id="KW-0831">Ubiquinone biosynthesis</keyword>
<comment type="function">
    <text evidence="1">Methyltransferase required for the conversion of demethylmenaquinol (DMKH2) to menaquinol (MKH2) and the conversion of 2-polyprenyl-6-methoxy-1,4-benzoquinol (DDMQH2) to 2-polyprenyl-3-methyl-6-methoxy-1,4-benzoquinol (DMQH2).</text>
</comment>
<comment type="catalytic activity">
    <reaction evidence="1">
        <text>a 2-demethylmenaquinol + S-adenosyl-L-methionine = a menaquinol + S-adenosyl-L-homocysteine + H(+)</text>
        <dbReference type="Rhea" id="RHEA:42640"/>
        <dbReference type="Rhea" id="RHEA-COMP:9539"/>
        <dbReference type="Rhea" id="RHEA-COMP:9563"/>
        <dbReference type="ChEBI" id="CHEBI:15378"/>
        <dbReference type="ChEBI" id="CHEBI:18151"/>
        <dbReference type="ChEBI" id="CHEBI:55437"/>
        <dbReference type="ChEBI" id="CHEBI:57856"/>
        <dbReference type="ChEBI" id="CHEBI:59789"/>
        <dbReference type="EC" id="2.1.1.163"/>
    </reaction>
</comment>
<comment type="catalytic activity">
    <reaction evidence="1">
        <text>a 2-methoxy-6-(all-trans-polyprenyl)benzene-1,4-diol + S-adenosyl-L-methionine = a 5-methoxy-2-methyl-3-(all-trans-polyprenyl)benzene-1,4-diol + S-adenosyl-L-homocysteine + H(+)</text>
        <dbReference type="Rhea" id="RHEA:28286"/>
        <dbReference type="Rhea" id="RHEA-COMP:10858"/>
        <dbReference type="Rhea" id="RHEA-COMP:10859"/>
        <dbReference type="ChEBI" id="CHEBI:15378"/>
        <dbReference type="ChEBI" id="CHEBI:57856"/>
        <dbReference type="ChEBI" id="CHEBI:59789"/>
        <dbReference type="ChEBI" id="CHEBI:84166"/>
        <dbReference type="ChEBI" id="CHEBI:84167"/>
        <dbReference type="EC" id="2.1.1.201"/>
    </reaction>
</comment>
<comment type="pathway">
    <text evidence="1">Quinol/quinone metabolism; menaquinone biosynthesis; menaquinol from 1,4-dihydroxy-2-naphthoate: step 2/2.</text>
</comment>
<comment type="pathway">
    <text evidence="1">Cofactor biosynthesis; ubiquinone biosynthesis.</text>
</comment>
<comment type="similarity">
    <text evidence="1">Belongs to the class I-like SAM-binding methyltransferase superfamily. MenG/UbiE family.</text>
</comment>
<accession>A4VGE5</accession>
<sequence>MTDPRKAHDAEPTTHFGYKNVPESQKAQKVAEVFHSVAAKYDLMNDLMSGGIHRLWKRFTIELSGARHGNRILDIAGGTGDLTRQFSRIVGPTGEVVLADINASMLKVGRDKLLDKGVAGNVRFVQADAEKLPFPDNYFDVVTIAFGLRNVTHKEDAIASMLRVLKPGGRLLVLEFSKPTNQLFSKAYDAYSFSLLPMMGKLITNDSESYRYLAESIRMHPDQETLKGMMEAAGFERVSYHNMTGGIVALHRGIKP</sequence>